<feature type="chain" id="PRO_0000181455" description="Probable nicotinate-nucleotide adenylyltransferase">
    <location>
        <begin position="1"/>
        <end position="210"/>
    </location>
</feature>
<gene>
    <name evidence="1" type="primary">nadD</name>
    <name type="ordered locus">SPy_0308</name>
    <name type="ordered locus">M5005_Spy0263</name>
</gene>
<evidence type="ECO:0000255" key="1">
    <source>
        <dbReference type="HAMAP-Rule" id="MF_00244"/>
    </source>
</evidence>
<dbReference type="EC" id="2.7.7.18" evidence="1"/>
<dbReference type="EMBL" id="AE004092">
    <property type="protein sequence ID" value="AAK33370.1"/>
    <property type="molecule type" value="Genomic_DNA"/>
</dbReference>
<dbReference type="EMBL" id="CP000017">
    <property type="protein sequence ID" value="AAZ50882.1"/>
    <property type="molecule type" value="Genomic_DNA"/>
</dbReference>
<dbReference type="RefSeq" id="NP_268649.1">
    <property type="nucleotide sequence ID" value="NC_002737.2"/>
</dbReference>
<dbReference type="SMR" id="Q9A1F2"/>
<dbReference type="PaxDb" id="1314-HKU360_00303"/>
<dbReference type="KEGG" id="spy:SPy_0308"/>
<dbReference type="KEGG" id="spz:M5005_Spy0263"/>
<dbReference type="PATRIC" id="fig|160490.10.peg.270"/>
<dbReference type="HOGENOM" id="CLU_069765_3_1_9"/>
<dbReference type="OMA" id="WIMGADS"/>
<dbReference type="UniPathway" id="UPA00253">
    <property type="reaction ID" value="UER00332"/>
</dbReference>
<dbReference type="Proteomes" id="UP000000750">
    <property type="component" value="Chromosome"/>
</dbReference>
<dbReference type="GO" id="GO:0005524">
    <property type="term" value="F:ATP binding"/>
    <property type="evidence" value="ECO:0007669"/>
    <property type="project" value="UniProtKB-KW"/>
</dbReference>
<dbReference type="GO" id="GO:0004515">
    <property type="term" value="F:nicotinate-nucleotide adenylyltransferase activity"/>
    <property type="evidence" value="ECO:0007669"/>
    <property type="project" value="UniProtKB-UniRule"/>
</dbReference>
<dbReference type="GO" id="GO:0009435">
    <property type="term" value="P:NAD biosynthetic process"/>
    <property type="evidence" value="ECO:0007669"/>
    <property type="project" value="UniProtKB-UniRule"/>
</dbReference>
<dbReference type="CDD" id="cd02165">
    <property type="entry name" value="NMNAT"/>
    <property type="match status" value="1"/>
</dbReference>
<dbReference type="FunFam" id="3.40.50.620:FF:000079">
    <property type="entry name" value="Probable nicotinate-nucleotide adenylyltransferase"/>
    <property type="match status" value="1"/>
</dbReference>
<dbReference type="Gene3D" id="3.40.50.620">
    <property type="entry name" value="HUPs"/>
    <property type="match status" value="1"/>
</dbReference>
<dbReference type="HAMAP" id="MF_00244">
    <property type="entry name" value="NaMN_adenylyltr"/>
    <property type="match status" value="1"/>
</dbReference>
<dbReference type="InterPro" id="IPR004821">
    <property type="entry name" value="Cyt_trans-like"/>
</dbReference>
<dbReference type="InterPro" id="IPR005248">
    <property type="entry name" value="NadD/NMNAT"/>
</dbReference>
<dbReference type="InterPro" id="IPR014729">
    <property type="entry name" value="Rossmann-like_a/b/a_fold"/>
</dbReference>
<dbReference type="NCBIfam" id="TIGR00125">
    <property type="entry name" value="cyt_tran_rel"/>
    <property type="match status" value="1"/>
</dbReference>
<dbReference type="NCBIfam" id="TIGR00482">
    <property type="entry name" value="nicotinate (nicotinamide) nucleotide adenylyltransferase"/>
    <property type="match status" value="1"/>
</dbReference>
<dbReference type="NCBIfam" id="NF000840">
    <property type="entry name" value="PRK00071.1-3"/>
    <property type="match status" value="1"/>
</dbReference>
<dbReference type="NCBIfam" id="NF000841">
    <property type="entry name" value="PRK00071.1-4"/>
    <property type="match status" value="1"/>
</dbReference>
<dbReference type="PANTHER" id="PTHR39321">
    <property type="entry name" value="NICOTINATE-NUCLEOTIDE ADENYLYLTRANSFERASE-RELATED"/>
    <property type="match status" value="1"/>
</dbReference>
<dbReference type="PANTHER" id="PTHR39321:SF3">
    <property type="entry name" value="PHOSPHOPANTETHEINE ADENYLYLTRANSFERASE"/>
    <property type="match status" value="1"/>
</dbReference>
<dbReference type="Pfam" id="PF01467">
    <property type="entry name" value="CTP_transf_like"/>
    <property type="match status" value="1"/>
</dbReference>
<dbReference type="SUPFAM" id="SSF52374">
    <property type="entry name" value="Nucleotidylyl transferase"/>
    <property type="match status" value="1"/>
</dbReference>
<protein>
    <recommendedName>
        <fullName evidence="1">Probable nicotinate-nucleotide adenylyltransferase</fullName>
        <ecNumber evidence="1">2.7.7.18</ecNumber>
    </recommendedName>
    <alternativeName>
        <fullName evidence="1">Deamido-NAD(+) diphosphorylase</fullName>
    </alternativeName>
    <alternativeName>
        <fullName evidence="1">Deamido-NAD(+) pyrophosphorylase</fullName>
    </alternativeName>
    <alternativeName>
        <fullName evidence="1">Nicotinate mononucleotide adenylyltransferase</fullName>
        <shortName evidence="1">NaMN adenylyltransferase</shortName>
    </alternativeName>
</protein>
<sequence>MALELLTPFTKVELEEEKKESNRKQIGILGGNFNPIHNAHLVVADQVRQQLGLDQVLLMPECKPPHVDAKETIDEKHRLRMLELAIEDVEGLAIETCELERQGISYTYDTMLYLTEQHPDVDFYFIIGADMVDYLPKWHRIDELVKLVQFVGVQRPKYKAGTSYPVIWVDLPLIDISSSMIRDFIKKGRQPNYLLPKRVLDYITQEGLYQ</sequence>
<reference key="1">
    <citation type="journal article" date="2001" name="Proc. Natl. Acad. Sci. U.S.A.">
        <title>Complete genome sequence of an M1 strain of Streptococcus pyogenes.</title>
        <authorList>
            <person name="Ferretti J.J."/>
            <person name="McShan W.M."/>
            <person name="Ajdic D.J."/>
            <person name="Savic D.J."/>
            <person name="Savic G."/>
            <person name="Lyon K."/>
            <person name="Primeaux C."/>
            <person name="Sezate S."/>
            <person name="Suvorov A.N."/>
            <person name="Kenton S."/>
            <person name="Lai H.S."/>
            <person name="Lin S.P."/>
            <person name="Qian Y."/>
            <person name="Jia H.G."/>
            <person name="Najar F.Z."/>
            <person name="Ren Q."/>
            <person name="Zhu H."/>
            <person name="Song L."/>
            <person name="White J."/>
            <person name="Yuan X."/>
            <person name="Clifton S.W."/>
            <person name="Roe B.A."/>
            <person name="McLaughlin R.E."/>
        </authorList>
    </citation>
    <scope>NUCLEOTIDE SEQUENCE [LARGE SCALE GENOMIC DNA]</scope>
    <source>
        <strain>ATCC 700294 / SF370 / Serotype M1</strain>
    </source>
</reference>
<reference key="2">
    <citation type="journal article" date="2005" name="J. Infect. Dis.">
        <title>Evolutionary origin and emergence of a highly successful clone of serotype M1 group A Streptococcus involved multiple horizontal gene transfer events.</title>
        <authorList>
            <person name="Sumby P."/>
            <person name="Porcella S.F."/>
            <person name="Madrigal A.G."/>
            <person name="Barbian K.D."/>
            <person name="Virtaneva K."/>
            <person name="Ricklefs S.M."/>
            <person name="Sturdevant D.E."/>
            <person name="Graham M.R."/>
            <person name="Vuopio-Varkila J."/>
            <person name="Hoe N.P."/>
            <person name="Musser J.M."/>
        </authorList>
    </citation>
    <scope>NUCLEOTIDE SEQUENCE [LARGE SCALE GENOMIC DNA]</scope>
    <source>
        <strain>ATCC BAA-947 / MGAS5005 / Serotype M1</strain>
    </source>
</reference>
<comment type="function">
    <text evidence="1">Catalyzes the reversible adenylation of nicotinate mononucleotide (NaMN) to nicotinic acid adenine dinucleotide (NaAD).</text>
</comment>
<comment type="catalytic activity">
    <reaction evidence="1">
        <text>nicotinate beta-D-ribonucleotide + ATP + H(+) = deamido-NAD(+) + diphosphate</text>
        <dbReference type="Rhea" id="RHEA:22860"/>
        <dbReference type="ChEBI" id="CHEBI:15378"/>
        <dbReference type="ChEBI" id="CHEBI:30616"/>
        <dbReference type="ChEBI" id="CHEBI:33019"/>
        <dbReference type="ChEBI" id="CHEBI:57502"/>
        <dbReference type="ChEBI" id="CHEBI:58437"/>
        <dbReference type="EC" id="2.7.7.18"/>
    </reaction>
</comment>
<comment type="pathway">
    <text evidence="1">Cofactor biosynthesis; NAD(+) biosynthesis; deamido-NAD(+) from nicotinate D-ribonucleotide: step 1/1.</text>
</comment>
<comment type="similarity">
    <text evidence="1">Belongs to the NadD family.</text>
</comment>
<keyword id="KW-0067">ATP-binding</keyword>
<keyword id="KW-0520">NAD</keyword>
<keyword id="KW-0547">Nucleotide-binding</keyword>
<keyword id="KW-0548">Nucleotidyltransferase</keyword>
<keyword id="KW-0662">Pyridine nucleotide biosynthesis</keyword>
<keyword id="KW-1185">Reference proteome</keyword>
<keyword id="KW-0808">Transferase</keyword>
<organism>
    <name type="scientific">Streptococcus pyogenes serotype M1</name>
    <dbReference type="NCBI Taxonomy" id="301447"/>
    <lineage>
        <taxon>Bacteria</taxon>
        <taxon>Bacillati</taxon>
        <taxon>Bacillota</taxon>
        <taxon>Bacilli</taxon>
        <taxon>Lactobacillales</taxon>
        <taxon>Streptococcaceae</taxon>
        <taxon>Streptococcus</taxon>
    </lineage>
</organism>
<accession>Q9A1F2</accession>
<accession>Q490T6</accession>
<name>NADD_STRP1</name>
<proteinExistence type="inferred from homology"/>